<keyword id="KW-0010">Activator</keyword>
<keyword id="KW-0238">DNA-binding</keyword>
<keyword id="KW-0539">Nucleus</keyword>
<keyword id="KW-1185">Reference proteome</keyword>
<keyword id="KW-0678">Repressor</keyword>
<keyword id="KW-0804">Transcription</keyword>
<keyword id="KW-0805">Transcription regulation</keyword>
<name>TFEC_BOVIN</name>
<reference key="1">
    <citation type="submission" date="2007-03" db="EMBL/GenBank/DDBJ databases">
        <authorList>
            <consortium name="NIH - Mammalian Gene Collection (MGC) project"/>
        </authorList>
    </citation>
    <scope>NUCLEOTIDE SEQUENCE [LARGE SCALE MRNA]</scope>
    <source>
        <strain>Hereford</strain>
        <tissue>Thymus</tissue>
    </source>
</reference>
<comment type="function">
    <text evidence="1">Transcriptional regulator that acts as a repressor or an activator. Acts as a transcriptional repressor on minimal promoter containing element F (that includes an E-box sequence). Binds to element F in an E-box sequence-specific manner. Acts as a transcriptional transactivator on the proximal promoter region of the tartrate-resistant acid phosphatase (TRAP) E-box containing promoter. Collaborates with MITF in target gene activation. Acts as a transcriptional repressor on minimal promoter containing mu E3 enhancer sequence. Binds to mu E3 DNA sequence of the immunoglobulin heavy-chain gene enhancer. Binds DNA in a homo- or heterodimeric form (By similarity).</text>
</comment>
<comment type="subunit">
    <text evidence="1">Homodimer. Forms heterodimers with MITF and TFE3. Interacts with MITF (By similarity).</text>
</comment>
<comment type="subcellular location">
    <subcellularLocation>
        <location evidence="2">Nucleus</location>
    </subcellularLocation>
</comment>
<comment type="similarity">
    <text evidence="4">Belongs to the MiT/TFE family.</text>
</comment>
<feature type="chain" id="PRO_0000313563" description="Transcription factor EC">
    <location>
        <begin position="1"/>
        <end position="317"/>
    </location>
</feature>
<feature type="domain" description="bHLH" evidence="2">
    <location>
        <begin position="110"/>
        <end position="163"/>
    </location>
</feature>
<feature type="region of interest" description="Necessary for transcriptional transactivation" evidence="1">
    <location>
        <begin position="1"/>
        <end position="90"/>
    </location>
</feature>
<feature type="region of interest" description="Disordered" evidence="3">
    <location>
        <begin position="1"/>
        <end position="44"/>
    </location>
</feature>
<feature type="region of interest" description="Necessary for transcriptional transactivation" evidence="1">
    <location>
        <begin position="241"/>
        <end position="317"/>
    </location>
</feature>
<feature type="region of interest" description="Disordered" evidence="3">
    <location>
        <begin position="297"/>
        <end position="317"/>
    </location>
</feature>
<feature type="compositionally biased region" description="Polar residues" evidence="3">
    <location>
        <begin position="34"/>
        <end position="43"/>
    </location>
</feature>
<organism>
    <name type="scientific">Bos taurus</name>
    <name type="common">Bovine</name>
    <dbReference type="NCBI Taxonomy" id="9913"/>
    <lineage>
        <taxon>Eukaryota</taxon>
        <taxon>Metazoa</taxon>
        <taxon>Chordata</taxon>
        <taxon>Craniata</taxon>
        <taxon>Vertebrata</taxon>
        <taxon>Euteleostomi</taxon>
        <taxon>Mammalia</taxon>
        <taxon>Eutheria</taxon>
        <taxon>Laurasiatheria</taxon>
        <taxon>Artiodactyla</taxon>
        <taxon>Ruminantia</taxon>
        <taxon>Pecora</taxon>
        <taxon>Bovidae</taxon>
        <taxon>Bovinae</taxon>
        <taxon>Bos</taxon>
    </lineage>
</organism>
<gene>
    <name type="primary">TFEC</name>
</gene>
<dbReference type="EMBL" id="BC134774">
    <property type="protein sequence ID" value="AAI34775.1"/>
    <property type="molecule type" value="mRNA"/>
</dbReference>
<dbReference type="RefSeq" id="NP_001077208.1">
    <property type="nucleotide sequence ID" value="NM_001083739.1"/>
</dbReference>
<dbReference type="SMR" id="A4IFU7"/>
<dbReference type="FunCoup" id="A4IFU7">
    <property type="interactions" value="137"/>
</dbReference>
<dbReference type="STRING" id="9913.ENSBTAP00000057172"/>
<dbReference type="PaxDb" id="9913-ENSBTAP00000018918"/>
<dbReference type="GeneID" id="539016"/>
<dbReference type="KEGG" id="bta:539016"/>
<dbReference type="CTD" id="22797"/>
<dbReference type="eggNOG" id="KOG1318">
    <property type="taxonomic scope" value="Eukaryota"/>
</dbReference>
<dbReference type="InParanoid" id="A4IFU7"/>
<dbReference type="OrthoDB" id="6242697at2759"/>
<dbReference type="Proteomes" id="UP000009136">
    <property type="component" value="Unplaced"/>
</dbReference>
<dbReference type="GO" id="GO:0005634">
    <property type="term" value="C:nucleus"/>
    <property type="evidence" value="ECO:0000318"/>
    <property type="project" value="GO_Central"/>
</dbReference>
<dbReference type="GO" id="GO:0000981">
    <property type="term" value="F:DNA-binding transcription factor activity, RNA polymerase II-specific"/>
    <property type="evidence" value="ECO:0000318"/>
    <property type="project" value="GO_Central"/>
</dbReference>
<dbReference type="GO" id="GO:0046983">
    <property type="term" value="F:protein dimerization activity"/>
    <property type="evidence" value="ECO:0007669"/>
    <property type="project" value="InterPro"/>
</dbReference>
<dbReference type="GO" id="GO:0000978">
    <property type="term" value="F:RNA polymerase II cis-regulatory region sequence-specific DNA binding"/>
    <property type="evidence" value="ECO:0000318"/>
    <property type="project" value="GO_Central"/>
</dbReference>
<dbReference type="GO" id="GO:0006357">
    <property type="term" value="P:regulation of transcription by RNA polymerase II"/>
    <property type="evidence" value="ECO:0000318"/>
    <property type="project" value="GO_Central"/>
</dbReference>
<dbReference type="CDD" id="cd18925">
    <property type="entry name" value="bHLHzip_TFEC"/>
    <property type="match status" value="1"/>
</dbReference>
<dbReference type="FunFam" id="4.10.280.10:FF:000003">
    <property type="entry name" value="microphthalmia-associated transcription factor isoform X1"/>
    <property type="match status" value="1"/>
</dbReference>
<dbReference type="Gene3D" id="4.10.280.10">
    <property type="entry name" value="Helix-loop-helix DNA-binding domain"/>
    <property type="match status" value="1"/>
</dbReference>
<dbReference type="InterPro" id="IPR011598">
    <property type="entry name" value="bHLH_dom"/>
</dbReference>
<dbReference type="InterPro" id="IPR036638">
    <property type="entry name" value="HLH_DNA-bd_sf"/>
</dbReference>
<dbReference type="InterPro" id="IPR021802">
    <property type="entry name" value="MiT/TFE_C"/>
</dbReference>
<dbReference type="PANTHER" id="PTHR45776">
    <property type="entry name" value="MIP04163P"/>
    <property type="match status" value="1"/>
</dbReference>
<dbReference type="PANTHER" id="PTHR45776:SF1">
    <property type="entry name" value="TRANSCRIPTION FACTOR EC"/>
    <property type="match status" value="1"/>
</dbReference>
<dbReference type="Pfam" id="PF11851">
    <property type="entry name" value="DUF3371"/>
    <property type="match status" value="1"/>
</dbReference>
<dbReference type="Pfam" id="PF00010">
    <property type="entry name" value="HLH"/>
    <property type="match status" value="1"/>
</dbReference>
<dbReference type="SMART" id="SM00353">
    <property type="entry name" value="HLH"/>
    <property type="match status" value="1"/>
</dbReference>
<dbReference type="SUPFAM" id="SSF47459">
    <property type="entry name" value="HLH, helix-loop-helix DNA-binding domain"/>
    <property type="match status" value="1"/>
</dbReference>
<dbReference type="PROSITE" id="PS50888">
    <property type="entry name" value="BHLH"/>
    <property type="match status" value="1"/>
</dbReference>
<protein>
    <recommendedName>
        <fullName>Transcription factor EC</fullName>
    </recommendedName>
</protein>
<accession>A4IFU7</accession>
<proteinExistence type="evidence at transcript level"/>
<evidence type="ECO:0000250" key="1"/>
<evidence type="ECO:0000255" key="2">
    <source>
        <dbReference type="PROSITE-ProRule" id="PRU00981"/>
    </source>
</evidence>
<evidence type="ECO:0000256" key="3">
    <source>
        <dbReference type="SAM" id="MobiDB-lite"/>
    </source>
</evidence>
<evidence type="ECO:0000305" key="4"/>
<sequence>MTLDHQILNQSFKRSHPPTPSSELLVQHGHPSPESDTGLTGNPLTRLLTLGKEDDNTEWHVSGSILDVYSGEQEISPVNMGLTSASCPSSLPMKREITETDTRALAKERQKKDNHNLIERRRRYNINYRIKELGTLIPKSNDPDMRWNKGTILKASVEYIKWLQKEQQRAQELEHRQKKLEQANRRLLLRIQELEIQARAHGLPTLASLVTVDLGAHITKQTHLEQNSGDYCQQLVLSQGTSPELCDQAMAFSDPLSHFTDLSFSAALKEEQRLDNMLLDDTVSPFGTDPLLSAISPAVSKESSRRSSFSSEDGDEL</sequence>